<proteinExistence type="evidence at transcript level"/>
<keyword id="KW-0426">Late protein</keyword>
<keyword id="KW-0472">Membrane</keyword>
<keyword id="KW-1185">Reference proteome</keyword>
<keyword id="KW-0812">Transmembrane</keyword>
<keyword id="KW-1133">Transmembrane helix</keyword>
<keyword id="KW-1162">Viral penetration into host cytoplasm</keyword>
<keyword id="KW-0946">Virion</keyword>
<keyword id="KW-1160">Virus entry into host cell</keyword>
<organismHost>
    <name type="scientific">Homo sapiens</name>
    <name type="common">Human</name>
    <dbReference type="NCBI Taxonomy" id="9606"/>
</organismHost>
<organism>
    <name type="scientific">Variola virus (isolate Human/India/Ind3/1967)</name>
    <name type="common">VARV</name>
    <name type="synonym">Smallpox virus</name>
    <dbReference type="NCBI Taxonomy" id="587200"/>
    <lineage>
        <taxon>Viruses</taxon>
        <taxon>Varidnaviria</taxon>
        <taxon>Bamfordvirae</taxon>
        <taxon>Nucleocytoviricota</taxon>
        <taxon>Pokkesviricetes</taxon>
        <taxon>Chitovirales</taxon>
        <taxon>Poxviridae</taxon>
        <taxon>Chordopoxvirinae</taxon>
        <taxon>Orthopoxvirus</taxon>
        <taxon>Variola virus</taxon>
    </lineage>
</organism>
<evidence type="ECO:0000250" key="1">
    <source>
        <dbReference type="UniProtKB" id="P68606"/>
    </source>
</evidence>
<evidence type="ECO:0000255" key="2"/>
<evidence type="ECO:0000305" key="3"/>
<dbReference type="EMBL" id="X67119">
    <property type="protein sequence ID" value="CAA47556.1"/>
    <property type="molecule type" value="Genomic_DNA"/>
</dbReference>
<dbReference type="EMBL" id="X69198">
    <property type="protein sequence ID" value="CAA48997.1"/>
    <property type="molecule type" value="Genomic_DNA"/>
</dbReference>
<dbReference type="PIR" id="I36842">
    <property type="entry name" value="I36842"/>
</dbReference>
<dbReference type="KEGG" id="vg:1486457"/>
<dbReference type="Proteomes" id="UP000002060">
    <property type="component" value="Segment"/>
</dbReference>
<dbReference type="GO" id="GO:0016020">
    <property type="term" value="C:membrane"/>
    <property type="evidence" value="ECO:0007669"/>
    <property type="project" value="UniProtKB-KW"/>
</dbReference>
<dbReference type="GO" id="GO:0055036">
    <property type="term" value="C:virion membrane"/>
    <property type="evidence" value="ECO:0007669"/>
    <property type="project" value="UniProtKB-SubCell"/>
</dbReference>
<dbReference type="GO" id="GO:0046718">
    <property type="term" value="P:symbiont entry into host cell"/>
    <property type="evidence" value="ECO:0007669"/>
    <property type="project" value="UniProtKB-KW"/>
</dbReference>
<dbReference type="InterPro" id="IPR009175">
    <property type="entry name" value="Poxvirus_I2"/>
</dbReference>
<dbReference type="Pfam" id="PF12575">
    <property type="entry name" value="Pox_EPC_I2-L1"/>
    <property type="match status" value="1"/>
</dbReference>
<dbReference type="PIRSF" id="PIRSF003766">
    <property type="entry name" value="VAC_I2L"/>
    <property type="match status" value="1"/>
</dbReference>
<sequence>MDKLYAAIFGVFMGSPEDDLTDFIEIVKSVLSDEKTVTSTNNTGCWGWYWLIIIFFIVLILLLLIYLYLKVVW</sequence>
<comment type="function">
    <text evidence="1">Late protein which probably plays a role in virus entry into the host cell.</text>
</comment>
<comment type="subcellular location">
    <subcellularLocation>
        <location evidence="1">Virion membrane</location>
        <topology evidence="1">Single-pass membrane protein</topology>
    </subcellularLocation>
    <text evidence="1">Component of the membrane of the mature virion.</text>
</comment>
<comment type="induction">
    <text>Expressed in the late phase of the viral replicative cycle.</text>
</comment>
<comment type="similarity">
    <text evidence="3">Belongs to the orthopoxvirus OPG078 family.</text>
</comment>
<accession>P0DOR3</accession>
<accession>P12922</accession>
<accession>P68607</accession>
<protein>
    <recommendedName>
        <fullName>Protein OPG078</fullName>
    </recommendedName>
    <alternativeName>
        <fullName>Protein I2</fullName>
    </alternativeName>
</protein>
<name>PG078_VAR67</name>
<reference key="1">
    <citation type="journal article" date="1993" name="Virus Res.">
        <title>Nucleotide sequence analysis of variola virus HindIII M, L, I genome fragments.</title>
        <authorList>
            <person name="Shchelkunov S.N."/>
            <person name="Blinov V.M."/>
            <person name="Totmenin A.V."/>
            <person name="Marennikova S.S."/>
            <person name="Kolykhalov A.A."/>
            <person name="Frolov I.V."/>
            <person name="Chizhikov V.E."/>
            <person name="Gytorov V.V."/>
            <person name="Gashikov P.V."/>
            <person name="Belanov E.F."/>
            <person name="Belavin P.A."/>
            <person name="Resenchuk S.M."/>
            <person name="Andzhaparidze O.G."/>
            <person name="Sandakhchiev L.S."/>
        </authorList>
    </citation>
    <scope>NUCLEOTIDE SEQUENCE [GENOMIC DNA]</scope>
</reference>
<reference key="2">
    <citation type="journal article" date="1993" name="Virus Res.">
        <title>Analysis of the nucleotide sequence of a 43 kbp segment of the genome of variola virus India-1967 strain.</title>
        <authorList>
            <person name="Shchelkunov S.N."/>
            <person name="Blinov V.M."/>
            <person name="Resenchuk S.M."/>
            <person name="Totmenin A.V."/>
            <person name="Sandakhchiev L.S."/>
        </authorList>
    </citation>
    <scope>NUCLEOTIDE SEQUENCE [GENOMIC DNA]</scope>
</reference>
<reference key="3">
    <citation type="journal article" date="1993" name="FEBS Lett.">
        <title>Genes of variola and vaccinia viruses necessary to overcome the host protective mechanisms.</title>
        <authorList>
            <person name="Shchelkunov S.N."/>
            <person name="Blinov V.M."/>
            <person name="Sandakhchiev L.S."/>
        </authorList>
    </citation>
    <scope>NUCLEOTIDE SEQUENCE [LARGE SCALE GENOMIC DNA]</scope>
</reference>
<gene>
    <name type="primary">OPG078</name>
    <name type="ORF">I2L</name>
</gene>
<feature type="chain" id="PRO_0000099569" description="Protein OPG078">
    <location>
        <begin position="1"/>
        <end position="73"/>
    </location>
</feature>
<feature type="transmembrane region" description="Helical" evidence="2">
    <location>
        <begin position="49"/>
        <end position="69"/>
    </location>
</feature>